<gene>
    <name type="primary">MT-CO3</name>
    <name type="synonym">COIII</name>
    <name type="synonym">COXIII</name>
    <name type="synonym">MTCO3</name>
</gene>
<accession>O03170</accession>
<feature type="chain" id="PRO_0000183796" description="Cytochrome c oxidase subunit 3">
    <location>
        <begin position="1"/>
        <end position="261"/>
    </location>
</feature>
<feature type="topological domain" description="Mitochondrial matrix" evidence="1">
    <location>
        <begin position="1"/>
        <end position="15"/>
    </location>
</feature>
<feature type="transmembrane region" description="Helical; Name=I" evidence="1">
    <location>
        <begin position="16"/>
        <end position="34"/>
    </location>
</feature>
<feature type="topological domain" description="Mitochondrial intermembrane" evidence="1">
    <location>
        <begin position="35"/>
        <end position="40"/>
    </location>
</feature>
<feature type="transmembrane region" description="Helical; Name=II" evidence="1">
    <location>
        <begin position="41"/>
        <end position="66"/>
    </location>
</feature>
<feature type="topological domain" description="Mitochondrial matrix" evidence="1">
    <location>
        <begin position="67"/>
        <end position="72"/>
    </location>
</feature>
<feature type="transmembrane region" description="Helical; Name=III" evidence="1">
    <location>
        <begin position="73"/>
        <end position="105"/>
    </location>
</feature>
<feature type="topological domain" description="Mitochondrial intermembrane" evidence="1">
    <location>
        <begin position="106"/>
        <end position="128"/>
    </location>
</feature>
<feature type="transmembrane region" description="Helical; Name=IV" evidence="1">
    <location>
        <begin position="129"/>
        <end position="152"/>
    </location>
</feature>
<feature type="topological domain" description="Mitochondrial matrix" evidence="1">
    <location>
        <begin position="153"/>
        <end position="155"/>
    </location>
</feature>
<feature type="transmembrane region" description="Helical; Name=V" evidence="1">
    <location>
        <begin position="156"/>
        <end position="183"/>
    </location>
</feature>
<feature type="topological domain" description="Mitochondrial intermembrane" evidence="1">
    <location>
        <begin position="184"/>
        <end position="190"/>
    </location>
</feature>
<feature type="transmembrane region" description="Helical; Name=VI" evidence="1">
    <location>
        <begin position="191"/>
        <end position="223"/>
    </location>
</feature>
<feature type="topological domain" description="Mitochondrial matrix" evidence="1">
    <location>
        <begin position="224"/>
        <end position="232"/>
    </location>
</feature>
<feature type="transmembrane region" description="Helical; Name=VII" evidence="1">
    <location>
        <begin position="233"/>
        <end position="256"/>
    </location>
</feature>
<feature type="topological domain" description="Mitochondrial intermembrane" evidence="1">
    <location>
        <begin position="257"/>
        <end position="261"/>
    </location>
</feature>
<dbReference type="EC" id="7.1.1.9"/>
<dbReference type="EMBL" id="U82228">
    <property type="protein sequence ID" value="AAC60324.1"/>
    <property type="molecule type" value="Genomic_DNA"/>
</dbReference>
<dbReference type="PIR" id="G58892">
    <property type="entry name" value="G58892"/>
</dbReference>
<dbReference type="RefSeq" id="NP_008335.1">
    <property type="nucleotide sequence ID" value="NC_001804.1"/>
</dbReference>
<dbReference type="SMR" id="O03170"/>
<dbReference type="FunCoup" id="O03170">
    <property type="interactions" value="172"/>
</dbReference>
<dbReference type="STRING" id="7897.ENSLACP00000021811"/>
<dbReference type="Ensembl" id="ENSLACT00000024862.1">
    <property type="protein sequence ID" value="ENSLACP00000021811.1"/>
    <property type="gene ID" value="ENSLACG00000022078.1"/>
</dbReference>
<dbReference type="GeneID" id="808089"/>
<dbReference type="KEGG" id="lcm:808089"/>
<dbReference type="CTD" id="4514"/>
<dbReference type="eggNOG" id="KOG4664">
    <property type="taxonomic scope" value="Eukaryota"/>
</dbReference>
<dbReference type="GeneTree" id="ENSGT00390000013064"/>
<dbReference type="HOGENOM" id="CLU_044071_0_0_1"/>
<dbReference type="InParanoid" id="O03170"/>
<dbReference type="OMA" id="SIYWWGS"/>
<dbReference type="OrthoDB" id="10050457at2759"/>
<dbReference type="TreeFam" id="TF343435"/>
<dbReference type="Proteomes" id="UP000008672">
    <property type="component" value="Mitochondrion"/>
</dbReference>
<dbReference type="Bgee" id="ENSLACG00000022078">
    <property type="expression patterns" value="Expressed in pelvic fin and 6 other cell types or tissues"/>
</dbReference>
<dbReference type="GO" id="GO:0005743">
    <property type="term" value="C:mitochondrial inner membrane"/>
    <property type="evidence" value="ECO:0007669"/>
    <property type="project" value="UniProtKB-SubCell"/>
</dbReference>
<dbReference type="GO" id="GO:0045277">
    <property type="term" value="C:respiratory chain complex IV"/>
    <property type="evidence" value="ECO:0000250"/>
    <property type="project" value="UniProtKB"/>
</dbReference>
<dbReference type="GO" id="GO:0004129">
    <property type="term" value="F:cytochrome-c oxidase activity"/>
    <property type="evidence" value="ECO:0007669"/>
    <property type="project" value="UniProtKB-EC"/>
</dbReference>
<dbReference type="GO" id="GO:0006123">
    <property type="term" value="P:mitochondrial electron transport, cytochrome c to oxygen"/>
    <property type="evidence" value="ECO:0007669"/>
    <property type="project" value="TreeGrafter"/>
</dbReference>
<dbReference type="CDD" id="cd01665">
    <property type="entry name" value="Cyt_c_Oxidase_III"/>
    <property type="match status" value="1"/>
</dbReference>
<dbReference type="FunFam" id="1.10.287.70:FF:000048">
    <property type="entry name" value="Cytochrome c oxidase subunit 3"/>
    <property type="match status" value="1"/>
</dbReference>
<dbReference type="FunFam" id="1.20.120.80:FF:000002">
    <property type="entry name" value="Cytochrome c oxidase subunit 3"/>
    <property type="match status" value="1"/>
</dbReference>
<dbReference type="Gene3D" id="1.10.287.70">
    <property type="match status" value="1"/>
</dbReference>
<dbReference type="Gene3D" id="1.20.120.80">
    <property type="entry name" value="Cytochrome c oxidase, subunit III, four-helix bundle"/>
    <property type="match status" value="1"/>
</dbReference>
<dbReference type="InterPro" id="IPR024791">
    <property type="entry name" value="Cyt_c/ubiquinol_Oxase_su3"/>
</dbReference>
<dbReference type="InterPro" id="IPR033945">
    <property type="entry name" value="Cyt_c_oxase_su3_dom"/>
</dbReference>
<dbReference type="InterPro" id="IPR000298">
    <property type="entry name" value="Cyt_c_oxidase-like_su3"/>
</dbReference>
<dbReference type="InterPro" id="IPR035973">
    <property type="entry name" value="Cyt_c_oxidase_su3-like_sf"/>
</dbReference>
<dbReference type="InterPro" id="IPR013833">
    <property type="entry name" value="Cyt_c_oxidase_su3_a-hlx"/>
</dbReference>
<dbReference type="PANTHER" id="PTHR11403:SF7">
    <property type="entry name" value="CYTOCHROME C OXIDASE SUBUNIT 3"/>
    <property type="match status" value="1"/>
</dbReference>
<dbReference type="PANTHER" id="PTHR11403">
    <property type="entry name" value="CYTOCHROME C OXIDASE SUBUNIT III"/>
    <property type="match status" value="1"/>
</dbReference>
<dbReference type="Pfam" id="PF00510">
    <property type="entry name" value="COX3"/>
    <property type="match status" value="1"/>
</dbReference>
<dbReference type="SUPFAM" id="SSF81452">
    <property type="entry name" value="Cytochrome c oxidase subunit III-like"/>
    <property type="match status" value="1"/>
</dbReference>
<dbReference type="PROSITE" id="PS50253">
    <property type="entry name" value="COX3"/>
    <property type="match status" value="1"/>
</dbReference>
<organism>
    <name type="scientific">Latimeria chalumnae</name>
    <name type="common">Coelacanth</name>
    <dbReference type="NCBI Taxonomy" id="7897"/>
    <lineage>
        <taxon>Eukaryota</taxon>
        <taxon>Metazoa</taxon>
        <taxon>Chordata</taxon>
        <taxon>Craniata</taxon>
        <taxon>Vertebrata</taxon>
        <taxon>Euteleostomi</taxon>
        <taxon>Coelacanthiformes</taxon>
        <taxon>Coelacanthidae</taxon>
        <taxon>Latimeria</taxon>
    </lineage>
</organism>
<name>COX3_LATCH</name>
<geneLocation type="mitochondrion"/>
<evidence type="ECO:0000250" key="1">
    <source>
        <dbReference type="UniProtKB" id="P00415"/>
    </source>
</evidence>
<evidence type="ECO:0000250" key="2">
    <source>
        <dbReference type="UniProtKB" id="P00420"/>
    </source>
</evidence>
<evidence type="ECO:0000305" key="3"/>
<comment type="function">
    <text evidence="2">Component of the cytochrome c oxidase, the last enzyme in the mitochondrial electron transport chain which drives oxidative phosphorylation. The respiratory chain contains 3 multisubunit complexes succinate dehydrogenase (complex II, CII), ubiquinol-cytochrome c oxidoreductase (cytochrome b-c1 complex, complex III, CIII) and cytochrome c oxidase (complex IV, CIV), that cooperate to transfer electrons derived from NADH and succinate to molecular oxygen, creating an electrochemical gradient over the inner membrane that drives transmembrane transport and the ATP synthase. Cytochrome c oxidase is the component of the respiratory chain that catalyzes the reduction of oxygen to water. Electrons originating from reduced cytochrome c in the intermembrane space (IMS) are transferred via the dinuclear copper A center (CU(A)) of subunit 2 and heme A of subunit 1 to the active site in subunit 1, a binuclear center (BNC) formed by heme A3 and copper B (CU(B)). The BNC reduces molecular oxygen to 2 water molecules using 4 electrons from cytochrome c in the IMS and 4 protons from the mitochondrial matrix.</text>
</comment>
<comment type="catalytic activity">
    <reaction evidence="2">
        <text>4 Fe(II)-[cytochrome c] + O2 + 8 H(+)(in) = 4 Fe(III)-[cytochrome c] + 2 H2O + 4 H(+)(out)</text>
        <dbReference type="Rhea" id="RHEA:11436"/>
        <dbReference type="Rhea" id="RHEA-COMP:10350"/>
        <dbReference type="Rhea" id="RHEA-COMP:14399"/>
        <dbReference type="ChEBI" id="CHEBI:15377"/>
        <dbReference type="ChEBI" id="CHEBI:15378"/>
        <dbReference type="ChEBI" id="CHEBI:15379"/>
        <dbReference type="ChEBI" id="CHEBI:29033"/>
        <dbReference type="ChEBI" id="CHEBI:29034"/>
        <dbReference type="EC" id="7.1.1.9"/>
    </reaction>
    <physiologicalReaction direction="left-to-right" evidence="2">
        <dbReference type="Rhea" id="RHEA:11437"/>
    </physiologicalReaction>
</comment>
<comment type="subunit">
    <text evidence="1">Component of the cytochrome c oxidase (complex IV, CIV), a multisubunit enzyme composed of 14 subunits. The complex is composed of a catalytic core of 3 subunits MT-CO1, MT-CO2 and MT-CO3, encoded in the mitochondrial DNA, and 11 supernumerary subunits COX4I, COX5A, COX5B, COX6A, COX6B, COX6C, COX7A, COX7B, COX7C, COX8 and NDUFA4, which are encoded in the nuclear genome. The complex exists as a monomer or a dimer and forms supercomplexes (SCs) in the inner mitochondrial membrane with NADH-ubiquinone oxidoreductase (complex I, CI) and ubiquinol-cytochrome c oxidoreductase (cytochrome b-c1 complex, complex III, CIII), resulting in different assemblies (supercomplex SCI(1)III(2)IV(1) and megacomplex MCI(2)III(2)IV(2)).</text>
</comment>
<comment type="subcellular location">
    <subcellularLocation>
        <location evidence="1">Mitochondrion inner membrane</location>
        <topology evidence="1">Multi-pass membrane protein</topology>
    </subcellularLocation>
</comment>
<comment type="similarity">
    <text evidence="3">Belongs to the cytochrome c oxidase subunit 3 family.</text>
</comment>
<reference key="1">
    <citation type="journal article" date="1997" name="Genetics">
        <title>The complete DNA sequence of the mitochondrial genome of a 'living fossil,' the coelacanth (Latimeria chalumnae).</title>
        <authorList>
            <person name="Zardoya R."/>
            <person name="Meyer A."/>
        </authorList>
    </citation>
    <scope>NUCLEOTIDE SEQUENCE [LARGE SCALE GENOMIC DNA]</scope>
</reference>
<proteinExistence type="inferred from homology"/>
<sequence length="261" mass="29694">MAHQAHAYHMVDPSPWPITGATAALLVTSGLAAWFHFNSMILILMGLTLLLLTMYQWWRDIIRESTFQGHHTLPVQKSLRYGMILFITSEVFFFLGFFWAFYHSSLAPTPELGGLWPPTGITPLDPFEVPLLNTAVLLASGITVTWAHHSLMEGQRKEAIQSLFITVLLGLYFTALQATEYYESPFTIADGAYGSTFFVATGFHGLHVIIGSTFLIVCLVRQTQYHFTSNHHFGFEAAAWYWHFVDVVWLFLYVSIYWWGS</sequence>
<keyword id="KW-0472">Membrane</keyword>
<keyword id="KW-0496">Mitochondrion</keyword>
<keyword id="KW-0999">Mitochondrion inner membrane</keyword>
<keyword id="KW-1185">Reference proteome</keyword>
<keyword id="KW-1278">Translocase</keyword>
<keyword id="KW-0812">Transmembrane</keyword>
<keyword id="KW-1133">Transmembrane helix</keyword>
<protein>
    <recommendedName>
        <fullName>Cytochrome c oxidase subunit 3</fullName>
        <ecNumber>7.1.1.9</ecNumber>
    </recommendedName>
    <alternativeName>
        <fullName>Cytochrome c oxidase polypeptide III</fullName>
    </alternativeName>
</protein>